<comment type="function">
    <text evidence="1 2 3 8">Lipase that primarily hydrolyzes triglycerides and galactosylglycerides (PubMed:23770034). In neonates, may play a major role in pancreatic digestion of dietary fats such as milk fat globules enriched in long-chain triglycerides (PubMed:23770034). Hydrolyzes short-, medium- and long-chain fatty acyls in triglycerides without apparent positional specificity (PubMed:23770034). Can completely deacylate triacylglycerols (By similarity). When the liver matures and bile salt synthesis increases, likely functions mainly as a galactolipase and monoacylglycerol lipase (By similarity). Hydrolyzes monogalactosyldiglycerols (MGDG) and digalactosyldiacylglycerols (DGDG) present in a plant-based diet, releasing long-chain polyunsaturated fatty acids (By similarity). Hydrolyzes medium- and long-chain fatty acyls in galactolipids. May act together with LIPF to hydrolyze partially digested triglycerides (By similarity). Hydrolyzes long-chain monoglycerides with high efficiency (By similarity). In cytotoxic T cells, contributes to perforin-dependent cell lysis, but is unlikely to mediate direct cytotoxicity (By similarity). Also has low phospholipase activity (PubMed:23770034). In neurons, required for the localization of the phospholipid 1-oleoyl-2-palmitoyl-PC (OPPC) to neurite tips through acyl chain remodeling of membrane phospholipids (By similarity). The resulting OPPC-rich lipid membrane domain recruits the t-SNARE protein STX4 by selectively interacting with the STX4 transmembrane domain and this promotes surface expression of the dopamine transporter SLC6A3/DAT at neurite tips by facilitating fusion of SLC6A3-containing transport vesicles with the plasma membrane (By similarity).</text>
</comment>
<comment type="catalytic activity">
    <reaction evidence="8">
        <text>a triacylglycerol + H2O = a diacylglycerol + a fatty acid + H(+)</text>
        <dbReference type="Rhea" id="RHEA:12044"/>
        <dbReference type="ChEBI" id="CHEBI:15377"/>
        <dbReference type="ChEBI" id="CHEBI:15378"/>
        <dbReference type="ChEBI" id="CHEBI:17855"/>
        <dbReference type="ChEBI" id="CHEBI:18035"/>
        <dbReference type="ChEBI" id="CHEBI:28868"/>
        <dbReference type="EC" id="3.1.1.3"/>
    </reaction>
    <physiologicalReaction direction="left-to-right" evidence="10">
        <dbReference type="Rhea" id="RHEA:12045"/>
    </physiologicalReaction>
</comment>
<comment type="catalytic activity">
    <reaction evidence="2">
        <text>a 1,2-diacyl-3-O-(beta-D-galactosyl)-sn-glycerol + 2 H2O = 3-beta-D-galactosyl-sn-glycerol + 2 a fatty acid + 2 H(+)</text>
        <dbReference type="Rhea" id="RHEA:13189"/>
        <dbReference type="ChEBI" id="CHEBI:15377"/>
        <dbReference type="ChEBI" id="CHEBI:15378"/>
        <dbReference type="ChEBI" id="CHEBI:15754"/>
        <dbReference type="ChEBI" id="CHEBI:17615"/>
        <dbReference type="ChEBI" id="CHEBI:28868"/>
        <dbReference type="EC" id="3.1.1.26"/>
    </reaction>
    <physiologicalReaction direction="left-to-right" evidence="2">
        <dbReference type="Rhea" id="RHEA:13190"/>
    </physiologicalReaction>
</comment>
<comment type="catalytic activity">
    <reaction evidence="8">
        <text>1,2,3-tri-(9Z-octadecenoyl)-glycerol + H2O = di-(9Z)-octadecenoylglycerol + (9Z)-octadecenoate + H(+)</text>
        <dbReference type="Rhea" id="RHEA:38575"/>
        <dbReference type="ChEBI" id="CHEBI:15377"/>
        <dbReference type="ChEBI" id="CHEBI:15378"/>
        <dbReference type="ChEBI" id="CHEBI:30823"/>
        <dbReference type="ChEBI" id="CHEBI:53753"/>
        <dbReference type="ChEBI" id="CHEBI:75945"/>
    </reaction>
    <physiologicalReaction direction="left-to-right" evidence="10">
        <dbReference type="Rhea" id="RHEA:38576"/>
    </physiologicalReaction>
</comment>
<comment type="catalytic activity">
    <reaction evidence="2">
        <text>di-(9Z)-octadecenoylglycerol + H2O = (9Z-octadecenoyl)-glycerol + (9Z)-octadecenoate + H(+)</text>
        <dbReference type="Rhea" id="RHEA:47868"/>
        <dbReference type="ChEBI" id="CHEBI:15377"/>
        <dbReference type="ChEBI" id="CHEBI:15378"/>
        <dbReference type="ChEBI" id="CHEBI:30823"/>
        <dbReference type="ChEBI" id="CHEBI:75937"/>
        <dbReference type="ChEBI" id="CHEBI:75945"/>
    </reaction>
    <physiologicalReaction direction="left-to-right" evidence="2">
        <dbReference type="Rhea" id="RHEA:47869"/>
    </physiologicalReaction>
</comment>
<comment type="catalytic activity">
    <reaction evidence="2">
        <text>(9Z-octadecenoyl)-glycerol + H2O = glycerol + (9Z)-octadecenoate + H(+)</text>
        <dbReference type="Rhea" id="RHEA:39955"/>
        <dbReference type="ChEBI" id="CHEBI:15377"/>
        <dbReference type="ChEBI" id="CHEBI:15378"/>
        <dbReference type="ChEBI" id="CHEBI:17754"/>
        <dbReference type="ChEBI" id="CHEBI:30823"/>
        <dbReference type="ChEBI" id="CHEBI:75937"/>
    </reaction>
    <physiologicalReaction direction="left-to-right" evidence="2">
        <dbReference type="Rhea" id="RHEA:39956"/>
    </physiologicalReaction>
</comment>
<comment type="catalytic activity">
    <reaction evidence="2">
        <text>1-(9Z-octadecenoyl)-glycerol + H2O = glycerol + (9Z)-octadecenoate + H(+)</text>
        <dbReference type="Rhea" id="RHEA:38487"/>
        <dbReference type="ChEBI" id="CHEBI:15377"/>
        <dbReference type="ChEBI" id="CHEBI:15378"/>
        <dbReference type="ChEBI" id="CHEBI:17754"/>
        <dbReference type="ChEBI" id="CHEBI:30823"/>
        <dbReference type="ChEBI" id="CHEBI:75342"/>
    </reaction>
    <physiologicalReaction direction="left-to-right" evidence="2">
        <dbReference type="Rhea" id="RHEA:38488"/>
    </physiologicalReaction>
</comment>
<comment type="catalytic activity">
    <reaction evidence="2">
        <text>1,2,3-tripropanoylglycerol + H2O = dipropanoylglycerol + propanoate + H(+)</text>
        <dbReference type="Rhea" id="RHEA:48024"/>
        <dbReference type="ChEBI" id="CHEBI:15377"/>
        <dbReference type="ChEBI" id="CHEBI:15378"/>
        <dbReference type="ChEBI" id="CHEBI:17272"/>
        <dbReference type="ChEBI" id="CHEBI:88153"/>
        <dbReference type="ChEBI" id="CHEBI:88155"/>
    </reaction>
    <physiologicalReaction direction="left-to-right" evidence="2">
        <dbReference type="Rhea" id="RHEA:48025"/>
    </physiologicalReaction>
</comment>
<comment type="catalytic activity">
    <reaction evidence="8">
        <text>1,2,3-tributanoylglycerol + H2O = dibutanoylglycerol + butanoate + H(+)</text>
        <dbReference type="Rhea" id="RHEA:40475"/>
        <dbReference type="ChEBI" id="CHEBI:15377"/>
        <dbReference type="ChEBI" id="CHEBI:15378"/>
        <dbReference type="ChEBI" id="CHEBI:17968"/>
        <dbReference type="ChEBI" id="CHEBI:35020"/>
        <dbReference type="ChEBI" id="CHEBI:76478"/>
    </reaction>
    <physiologicalReaction direction="left-to-right" evidence="10">
        <dbReference type="Rhea" id="RHEA:40476"/>
    </physiologicalReaction>
</comment>
<comment type="catalytic activity">
    <reaction evidence="8">
        <text>1,2,3-trioctanoylglycerol + H2O = dioctanoylglycerol + octanoate + H(+)</text>
        <dbReference type="Rhea" id="RHEA:47864"/>
        <dbReference type="ChEBI" id="CHEBI:15377"/>
        <dbReference type="ChEBI" id="CHEBI:15378"/>
        <dbReference type="ChEBI" id="CHEBI:25646"/>
        <dbReference type="ChEBI" id="CHEBI:76978"/>
        <dbReference type="ChEBI" id="CHEBI:88066"/>
    </reaction>
    <physiologicalReaction direction="left-to-right" evidence="10">
        <dbReference type="Rhea" id="RHEA:47865"/>
    </physiologicalReaction>
</comment>
<comment type="catalytic activity">
    <reaction evidence="2">
        <text>1,2-didecanoylglycerol + H2O = decanoylglycerol + decanoate + H(+)</text>
        <dbReference type="Rhea" id="RHEA:48596"/>
        <dbReference type="ChEBI" id="CHEBI:11152"/>
        <dbReference type="ChEBI" id="CHEBI:15377"/>
        <dbReference type="ChEBI" id="CHEBI:15378"/>
        <dbReference type="ChEBI" id="CHEBI:27689"/>
        <dbReference type="ChEBI" id="CHEBI:90605"/>
    </reaction>
    <physiologicalReaction direction="left-to-right" evidence="2">
        <dbReference type="Rhea" id="RHEA:48597"/>
    </physiologicalReaction>
</comment>
<comment type="catalytic activity">
    <reaction evidence="2">
        <text>long chain 1,2-diacyl-3-O-beta-D-galactosyl-sn-glycerol + H2O = long chain acyl-3-O-beta-D-galactosyl-sn-glycerol + a fatty acid + H(+)</text>
        <dbReference type="Rhea" id="RHEA:48700"/>
        <dbReference type="ChEBI" id="CHEBI:15377"/>
        <dbReference type="ChEBI" id="CHEBI:15378"/>
        <dbReference type="ChEBI" id="CHEBI:28868"/>
        <dbReference type="ChEBI" id="CHEBI:90477"/>
        <dbReference type="ChEBI" id="CHEBI:90770"/>
    </reaction>
    <physiologicalReaction direction="left-to-right" evidence="2">
        <dbReference type="Rhea" id="RHEA:48701"/>
    </physiologicalReaction>
</comment>
<comment type="catalytic activity">
    <reaction evidence="2">
        <text>1,2-dioctanoyl-3-O-beta-D-galactosyl-sn-glycerol + H2O = octanoyl-3-(beta-D-galactosyl)-sn-glycerol + octanoate + H(+)</text>
        <dbReference type="Rhea" id="RHEA:48696"/>
        <dbReference type="ChEBI" id="CHEBI:15377"/>
        <dbReference type="ChEBI" id="CHEBI:15378"/>
        <dbReference type="ChEBI" id="CHEBI:25646"/>
        <dbReference type="ChEBI" id="CHEBI:90453"/>
        <dbReference type="ChEBI" id="CHEBI:90769"/>
    </reaction>
    <physiologicalReaction direction="left-to-right" evidence="2">
        <dbReference type="Rhea" id="RHEA:48697"/>
    </physiologicalReaction>
</comment>
<comment type="catalytic activity">
    <reaction evidence="2">
        <text>1,2-didodecanoyl-3-beta-D-galactosyl-sn-glycerol + H2O = dodecanoyl-3-beta-D-galactosyl-sn-glycerol + dodecanoate + H(+)</text>
        <dbReference type="Rhea" id="RHEA:48540"/>
        <dbReference type="ChEBI" id="CHEBI:15377"/>
        <dbReference type="ChEBI" id="CHEBI:15378"/>
        <dbReference type="ChEBI" id="CHEBI:18262"/>
        <dbReference type="ChEBI" id="CHEBI:90340"/>
        <dbReference type="ChEBI" id="CHEBI:90515"/>
    </reaction>
    <physiologicalReaction direction="left-to-right" evidence="2">
        <dbReference type="Rhea" id="RHEA:48541"/>
    </physiologicalReaction>
</comment>
<comment type="catalytic activity">
    <reaction evidence="2">
        <text>1-beta-D-galactosyl-2,3-didodecanoyl-sn-glycerol + H2O = 1-beta-D-galactosyl-dodecanoyl-sn-glycerol + dodecanoate + H(+)</text>
        <dbReference type="Rhea" id="RHEA:48536"/>
        <dbReference type="ChEBI" id="CHEBI:15377"/>
        <dbReference type="ChEBI" id="CHEBI:15378"/>
        <dbReference type="ChEBI" id="CHEBI:18262"/>
        <dbReference type="ChEBI" id="CHEBI:90342"/>
        <dbReference type="ChEBI" id="CHEBI:90514"/>
    </reaction>
    <physiologicalReaction direction="left-to-right" evidence="2">
        <dbReference type="Rhea" id="RHEA:48537"/>
    </physiologicalReaction>
</comment>
<comment type="catalytic activity">
    <reaction evidence="2">
        <text>a 1,2-diacyl-3-O-[alpha-D-galactosyl-(1-&gt;6)-beta-D-galactosyl]-sn-glycerol + H2O = acyl-3-O-[alpha-D-galactosyl-(1-&gt;6)-beta-D-galactosyl]-sn-glycerol + a fatty acid + H(+)</text>
        <dbReference type="Rhea" id="RHEA:48372"/>
        <dbReference type="ChEBI" id="CHEBI:15377"/>
        <dbReference type="ChEBI" id="CHEBI:15378"/>
        <dbReference type="ChEBI" id="CHEBI:28396"/>
        <dbReference type="ChEBI" id="CHEBI:28868"/>
        <dbReference type="ChEBI" id="CHEBI:90310"/>
    </reaction>
    <physiologicalReaction direction="left-to-right" evidence="2">
        <dbReference type="Rhea" id="RHEA:48373"/>
    </physiologicalReaction>
</comment>
<comment type="catalytic activity">
    <reaction evidence="2">
        <text>long chain 1,2-diacyl-3-O-[alpha-D-galactosyl-(1-&gt;6)-beta-D-galactosyl]-sn-glycerol + H2O = long chain acyl-3-O-[alpha-D-galactosyl-(1-&gt;6)-beta-D-galactosyl]-sn-glycerol + a fatty acid + H(+)</text>
        <dbReference type="Rhea" id="RHEA:48708"/>
        <dbReference type="ChEBI" id="CHEBI:15377"/>
        <dbReference type="ChEBI" id="CHEBI:15378"/>
        <dbReference type="ChEBI" id="CHEBI:28868"/>
        <dbReference type="ChEBI" id="CHEBI:90463"/>
        <dbReference type="ChEBI" id="CHEBI:90774"/>
    </reaction>
    <physiologicalReaction direction="left-to-right" evidence="2">
        <dbReference type="Rhea" id="RHEA:48709"/>
    </physiologicalReaction>
</comment>
<comment type="catalytic activity">
    <reaction evidence="2">
        <text>1,2-dioctanoyl-3-O-[alpha-D-galactosyl-(1-&gt;6)-beta-D-galactosyl]-sn-glycerol + H2O = octanoyl-3-O-[alpha-D-galactosyl-(1-&gt;6)-beta-D-galactosyl]-sn-glycerol + octanoate + H(+)</text>
        <dbReference type="Rhea" id="RHEA:48692"/>
        <dbReference type="ChEBI" id="CHEBI:15377"/>
        <dbReference type="ChEBI" id="CHEBI:15378"/>
        <dbReference type="ChEBI" id="CHEBI:25646"/>
        <dbReference type="ChEBI" id="CHEBI:90457"/>
        <dbReference type="ChEBI" id="CHEBI:90768"/>
    </reaction>
    <physiologicalReaction direction="left-to-right" evidence="2">
        <dbReference type="Rhea" id="RHEA:48693"/>
    </physiologicalReaction>
</comment>
<comment type="catalytic activity">
    <reaction evidence="2">
        <text>1,2-didodecanoyl-3-O-[alpha-D-galactosyl-(1-&gt;6)-beta-D-galactosyl]-sn-glycerol + H2O = dodecanoyl-3-O-[alpha-D-galactosyl-(1-&gt;6)-beta-D-galactosyl]-sn-glycerol + dodecanoate + H(+)</text>
        <dbReference type="Rhea" id="RHEA:48516"/>
        <dbReference type="ChEBI" id="CHEBI:15377"/>
        <dbReference type="ChEBI" id="CHEBI:15378"/>
        <dbReference type="ChEBI" id="CHEBI:18262"/>
        <dbReference type="ChEBI" id="CHEBI:90337"/>
        <dbReference type="ChEBI" id="CHEBI:90359"/>
    </reaction>
    <physiologicalReaction direction="left-to-right" evidence="2">
        <dbReference type="Rhea" id="RHEA:48517"/>
    </physiologicalReaction>
</comment>
<comment type="catalytic activity">
    <reaction evidence="8">
        <text>a 1,2-diacyl-sn-glycero-3-phosphocholine + H2O = a monoacyl-sn-glycero-3-phosphocholine + a fatty acid + H(+)</text>
        <dbReference type="Rhea" id="RHEA:44664"/>
        <dbReference type="ChEBI" id="CHEBI:15377"/>
        <dbReference type="ChEBI" id="CHEBI:15378"/>
        <dbReference type="ChEBI" id="CHEBI:28868"/>
        <dbReference type="ChEBI" id="CHEBI:57643"/>
        <dbReference type="ChEBI" id="CHEBI:84465"/>
    </reaction>
    <physiologicalReaction direction="left-to-right" evidence="10">
        <dbReference type="Rhea" id="RHEA:44665"/>
    </physiologicalReaction>
</comment>
<comment type="activity regulation">
    <text evidence="8">Up-regulated by CLPS in the presence of increasing concentrations of bile salts.</text>
</comment>
<comment type="pathway">
    <text evidence="8">Glycerolipid metabolism; triacylglycerol degradation.</text>
</comment>
<comment type="pathway">
    <text evidence="8">Glycolipid metabolism.</text>
</comment>
<comment type="subcellular location">
    <subcellularLocation>
        <location evidence="2">Secreted</location>
    </subcellularLocation>
    <subcellularLocation>
        <location evidence="3">Zymogen granule membrane</location>
        <topology evidence="3">Peripheral membrane protein</topology>
    </subcellularLocation>
    <subcellularLocation>
        <location evidence="3">Cell projection</location>
        <location evidence="3">Neuron projection</location>
    </subcellularLocation>
    <text evidence="3">Localizes to neurite tips in neuronal cells.</text>
</comment>
<comment type="similarity">
    <text evidence="9">Belongs to the AB hydrolase superfamily. Lipase family.</text>
</comment>
<keyword id="KW-0106">Calcium</keyword>
<keyword id="KW-0966">Cell projection</keyword>
<keyword id="KW-0968">Cytoplasmic vesicle</keyword>
<keyword id="KW-1015">Disulfide bond</keyword>
<keyword id="KW-0325">Glycoprotein</keyword>
<keyword id="KW-0378">Hydrolase</keyword>
<keyword id="KW-0442">Lipid degradation</keyword>
<keyword id="KW-0443">Lipid metabolism</keyword>
<keyword id="KW-0472">Membrane</keyword>
<keyword id="KW-0479">Metal-binding</keyword>
<keyword id="KW-1185">Reference proteome</keyword>
<keyword id="KW-0964">Secreted</keyword>
<keyword id="KW-0732">Signal</keyword>
<proteinExistence type="evidence at protein level"/>
<organism>
    <name type="scientific">Sus scrofa</name>
    <name type="common">Pig</name>
    <dbReference type="NCBI Taxonomy" id="9823"/>
    <lineage>
        <taxon>Eukaryota</taxon>
        <taxon>Metazoa</taxon>
        <taxon>Chordata</taxon>
        <taxon>Craniata</taxon>
        <taxon>Vertebrata</taxon>
        <taxon>Euteleostomi</taxon>
        <taxon>Mammalia</taxon>
        <taxon>Eutheria</taxon>
        <taxon>Laurasiatheria</taxon>
        <taxon>Artiodactyla</taxon>
        <taxon>Suina</taxon>
        <taxon>Suidae</taxon>
        <taxon>Sus</taxon>
    </lineage>
</organism>
<protein>
    <recommendedName>
        <fullName evidence="2">Pancreatic lipase-related protein 2</fullName>
        <shortName evidence="2">PL-RP2</shortName>
    </recommendedName>
    <alternativeName>
        <fullName evidence="1">Cytotoxic T lymphocyte lipase</fullName>
    </alternativeName>
    <alternativeName>
        <fullName>Galactolipase</fullName>
        <ecNumber evidence="2">3.1.1.26</ecNumber>
    </alternativeName>
    <alternativeName>
        <fullName>Triacylglycerol lipase</fullName>
        <ecNumber evidence="8">3.1.1.3</ecNumber>
    </alternativeName>
</protein>
<reference key="1">
    <citation type="journal article" date="2004" name="Nucleic Acids Res.">
        <title>PEDE (Pig EST Data Explorer): construction of a database for ESTs derived from porcine full-length cDNA libraries.</title>
        <authorList>
            <person name="Uenishi H."/>
            <person name="Eguchi T."/>
            <person name="Suzuki K."/>
            <person name="Sawazaki T."/>
            <person name="Toki D."/>
            <person name="Shinkai H."/>
            <person name="Okumura N."/>
            <person name="Hamasima N."/>
            <person name="Awata T."/>
        </authorList>
    </citation>
    <scope>NUCLEOTIDE SEQUENCE [LARGE SCALE MRNA]</scope>
    <source>
        <tissue>Intestine</tissue>
    </source>
</reference>
<reference key="2">
    <citation type="submission" date="2008-05" db="EMBL/GenBank/DDBJ databases">
        <title>Cloning, Expression, Regulation and Association Analysis with Production Traits of the Porcine PNLIPRP2 Gene.</title>
        <authorList>
            <person name="Cheng L."/>
            <person name="Xiong Y."/>
        </authorList>
    </citation>
    <scope>NUCLEOTIDE SEQUENCE [MRNA]</scope>
</reference>
<reference key="3">
    <citation type="journal article" date="2013" name="Biochim. Biophys. Acta">
        <title>Porcine pancreatic lipase related protein 2 has high triglyceride lipase activity in the absence of colipase.</title>
        <authorList>
            <person name="Xiao X."/>
            <person name="Ross L.E."/>
            <person name="Sevilla W.A."/>
            <person name="Wang Y."/>
            <person name="Lowe M.E."/>
        </authorList>
    </citation>
    <scope>FUNCTION</scope>
    <scope>CATALYTIC ACTIVITY</scope>
    <scope>ACTIVITY REGULATION</scope>
    <scope>SUBCELLULAR LOCATION</scope>
    <scope>TISSUE SPECIFICITY</scope>
    <scope>PATHWAY</scope>
</reference>
<gene>
    <name type="primary">PNLIPRP2</name>
</gene>
<accession>D7EZN2</accession>
<feature type="signal peptide" evidence="4">
    <location>
        <begin position="1"/>
        <end position="17"/>
    </location>
</feature>
<feature type="chain" id="PRO_5009996558" description="Pancreatic lipase-related protein 2" evidence="4">
    <location>
        <begin position="18"/>
        <end position="471"/>
    </location>
</feature>
<feature type="domain" description="PLAT" evidence="5">
    <location>
        <begin position="359"/>
        <end position="471"/>
    </location>
</feature>
<feature type="region of interest" description="Required for galactolipase activity" evidence="2">
    <location>
        <begin position="93"/>
        <end position="105"/>
    </location>
</feature>
<feature type="region of interest" description="Required for galactolipase activity" evidence="2">
    <location>
        <begin position="257"/>
        <end position="279"/>
    </location>
</feature>
<feature type="active site" description="Nucleophile" evidence="2">
    <location>
        <position position="171"/>
    </location>
</feature>
<feature type="active site" description="Charge relay system" evidence="2 7">
    <location>
        <position position="195"/>
    </location>
</feature>
<feature type="active site" description="Charge relay system" evidence="2 7">
    <location>
        <position position="282"/>
    </location>
</feature>
<feature type="binding site" evidence="2">
    <location>
        <position position="206"/>
    </location>
    <ligand>
        <name>Ca(2+)</name>
        <dbReference type="ChEBI" id="CHEBI:29108"/>
    </ligand>
</feature>
<feature type="binding site" evidence="2">
    <location>
        <position position="209"/>
    </location>
    <ligand>
        <name>Ca(2+)</name>
        <dbReference type="ChEBI" id="CHEBI:29108"/>
    </ligand>
</feature>
<feature type="binding site" evidence="2">
    <location>
        <position position="211"/>
    </location>
    <ligand>
        <name>Ca(2+)</name>
        <dbReference type="ChEBI" id="CHEBI:29108"/>
    </ligand>
</feature>
<feature type="binding site" evidence="2">
    <location>
        <position position="214"/>
    </location>
    <ligand>
        <name>Ca(2+)</name>
        <dbReference type="ChEBI" id="CHEBI:29108"/>
    </ligand>
</feature>
<feature type="glycosylation site" description="N-linked (GlcNAc...) asparagine" evidence="6">
    <location>
        <position position="71"/>
    </location>
</feature>
<feature type="glycosylation site" description="N-linked (GlcNAc...) asparagine" evidence="6">
    <location>
        <position position="355"/>
    </location>
</feature>
<feature type="disulfide bond" evidence="2 5">
    <location>
        <begin position="21"/>
        <end position="27"/>
    </location>
</feature>
<feature type="disulfide bond" evidence="2 5">
    <location>
        <begin position="109"/>
        <end position="120"/>
    </location>
</feature>
<feature type="disulfide bond" evidence="2 5">
    <location>
        <begin position="256"/>
        <end position="280"/>
    </location>
</feature>
<feature type="disulfide bond" evidence="2 5">
    <location>
        <begin position="304"/>
        <end position="317"/>
    </location>
</feature>
<feature type="disulfide bond" evidence="2 5">
    <location>
        <begin position="320"/>
        <end position="325"/>
    </location>
</feature>
<feature type="disulfide bond" evidence="5">
    <location>
        <begin position="455"/>
        <end position="471"/>
    </location>
</feature>
<dbReference type="EC" id="3.1.1.26" evidence="2"/>
<dbReference type="EC" id="3.1.1.3" evidence="8"/>
<dbReference type="EMBL" id="AK231359">
    <property type="status" value="NOT_ANNOTATED_CDS"/>
    <property type="molecule type" value="mRNA"/>
</dbReference>
<dbReference type="EMBL" id="EU715062">
    <property type="protein sequence ID" value="ACI00230.1"/>
    <property type="molecule type" value="mRNA"/>
</dbReference>
<dbReference type="EMBL" id="EU715063">
    <property type="protein sequence ID" value="ACI00231.1"/>
    <property type="molecule type" value="Genomic_DNA"/>
</dbReference>
<dbReference type="RefSeq" id="NP_001177220.1">
    <property type="nucleotide sequence ID" value="NM_001190291.2"/>
</dbReference>
<dbReference type="SMR" id="D7EZN2"/>
<dbReference type="FunCoup" id="D7EZN2">
    <property type="interactions" value="176"/>
</dbReference>
<dbReference type="SwissLipids" id="SLP:000001433"/>
<dbReference type="ESTHER" id="pig-a0a287b364">
    <property type="family name" value="Pancreatic_lipase"/>
</dbReference>
<dbReference type="GlyCosmos" id="D7EZN2">
    <property type="glycosylation" value="2 sites, No reported glycans"/>
</dbReference>
<dbReference type="GlyGen" id="D7EZN2">
    <property type="glycosylation" value="2 sites"/>
</dbReference>
<dbReference type="GeneID" id="100462755"/>
<dbReference type="KEGG" id="ssc:100462755"/>
<dbReference type="CTD" id="5408"/>
<dbReference type="InParanoid" id="D7EZN2"/>
<dbReference type="OrthoDB" id="199913at2759"/>
<dbReference type="UniPathway" id="UPA00256"/>
<dbReference type="Proteomes" id="UP000008227">
    <property type="component" value="Unplaced"/>
</dbReference>
<dbReference type="Proteomes" id="UP000314985">
    <property type="component" value="Unplaced"/>
</dbReference>
<dbReference type="Proteomes" id="UP000694570">
    <property type="component" value="Unplaced"/>
</dbReference>
<dbReference type="Proteomes" id="UP000694571">
    <property type="component" value="Unplaced"/>
</dbReference>
<dbReference type="Proteomes" id="UP000694720">
    <property type="component" value="Unplaced"/>
</dbReference>
<dbReference type="Proteomes" id="UP000694722">
    <property type="component" value="Unplaced"/>
</dbReference>
<dbReference type="Proteomes" id="UP000694723">
    <property type="component" value="Unplaced"/>
</dbReference>
<dbReference type="Proteomes" id="UP000694724">
    <property type="component" value="Unplaced"/>
</dbReference>
<dbReference type="Proteomes" id="UP000694725">
    <property type="component" value="Unplaced"/>
</dbReference>
<dbReference type="Proteomes" id="UP000694726">
    <property type="component" value="Unplaced"/>
</dbReference>
<dbReference type="Proteomes" id="UP000694727">
    <property type="component" value="Unplaced"/>
</dbReference>
<dbReference type="Proteomes" id="UP000694728">
    <property type="component" value="Unplaced"/>
</dbReference>
<dbReference type="GO" id="GO:0005615">
    <property type="term" value="C:extracellular space"/>
    <property type="evidence" value="ECO:0000318"/>
    <property type="project" value="GO_Central"/>
</dbReference>
<dbReference type="GO" id="GO:0043005">
    <property type="term" value="C:neuron projection"/>
    <property type="evidence" value="ECO:0000250"/>
    <property type="project" value="UniProtKB"/>
</dbReference>
<dbReference type="GO" id="GO:0042589">
    <property type="term" value="C:zymogen granule membrane"/>
    <property type="evidence" value="ECO:0007669"/>
    <property type="project" value="UniProtKB-SubCell"/>
</dbReference>
<dbReference type="GO" id="GO:0047714">
    <property type="term" value="F:galactolipase activity"/>
    <property type="evidence" value="ECO:0000318"/>
    <property type="project" value="GO_Central"/>
</dbReference>
<dbReference type="GO" id="GO:0004465">
    <property type="term" value="F:lipoprotein lipase activity"/>
    <property type="evidence" value="ECO:0000318"/>
    <property type="project" value="GO_Central"/>
</dbReference>
<dbReference type="GO" id="GO:0046872">
    <property type="term" value="F:metal ion binding"/>
    <property type="evidence" value="ECO:0007669"/>
    <property type="project" value="UniProtKB-KW"/>
</dbReference>
<dbReference type="GO" id="GO:0008970">
    <property type="term" value="F:phospholipase A1 activity"/>
    <property type="evidence" value="ECO:0000318"/>
    <property type="project" value="GO_Central"/>
</dbReference>
<dbReference type="GO" id="GO:0004806">
    <property type="term" value="F:triacylglycerol lipase activity"/>
    <property type="evidence" value="ECO:0000314"/>
    <property type="project" value="UniProtKB"/>
</dbReference>
<dbReference type="GO" id="GO:0042632">
    <property type="term" value="P:cholesterol homeostasis"/>
    <property type="evidence" value="ECO:0000318"/>
    <property type="project" value="GO_Central"/>
</dbReference>
<dbReference type="GO" id="GO:0006633">
    <property type="term" value="P:fatty acid biosynthetic process"/>
    <property type="evidence" value="ECO:0000318"/>
    <property type="project" value="GO_Central"/>
</dbReference>
<dbReference type="GO" id="GO:0034375">
    <property type="term" value="P:high-density lipoprotein particle remodeling"/>
    <property type="evidence" value="ECO:0000318"/>
    <property type="project" value="GO_Central"/>
</dbReference>
<dbReference type="GO" id="GO:0009395">
    <property type="term" value="P:phospholipid catabolic process"/>
    <property type="evidence" value="ECO:0000318"/>
    <property type="project" value="GO_Central"/>
</dbReference>
<dbReference type="GO" id="GO:0006644">
    <property type="term" value="P:phospholipid metabolic process"/>
    <property type="evidence" value="ECO:0000250"/>
    <property type="project" value="UniProtKB"/>
</dbReference>
<dbReference type="GO" id="GO:0019433">
    <property type="term" value="P:triglyceride catabolic process"/>
    <property type="evidence" value="ECO:0000314"/>
    <property type="project" value="UniProtKB"/>
</dbReference>
<dbReference type="CDD" id="cd00707">
    <property type="entry name" value="Pancreat_lipase_like"/>
    <property type="match status" value="1"/>
</dbReference>
<dbReference type="CDD" id="cd01759">
    <property type="entry name" value="PLAT_PL"/>
    <property type="match status" value="1"/>
</dbReference>
<dbReference type="FunFam" id="3.40.50.1820:FF:000033">
    <property type="entry name" value="Pancreatic triacylglycerol lipase"/>
    <property type="match status" value="1"/>
</dbReference>
<dbReference type="FunFam" id="2.60.60.20:FF:000003">
    <property type="entry name" value="Triacylglycerol lipase"/>
    <property type="match status" value="1"/>
</dbReference>
<dbReference type="Gene3D" id="3.40.50.1820">
    <property type="entry name" value="alpha/beta hydrolase"/>
    <property type="match status" value="1"/>
</dbReference>
<dbReference type="Gene3D" id="2.60.60.20">
    <property type="entry name" value="PLAT/LH2 domain"/>
    <property type="match status" value="1"/>
</dbReference>
<dbReference type="InterPro" id="IPR029058">
    <property type="entry name" value="AB_hydrolase_fold"/>
</dbReference>
<dbReference type="InterPro" id="IPR013818">
    <property type="entry name" value="Lipase"/>
</dbReference>
<dbReference type="InterPro" id="IPR016272">
    <property type="entry name" value="Lipase_LIPH"/>
</dbReference>
<dbReference type="InterPro" id="IPR033906">
    <property type="entry name" value="Lipase_N"/>
</dbReference>
<dbReference type="InterPro" id="IPR002331">
    <property type="entry name" value="Lipase_panc"/>
</dbReference>
<dbReference type="InterPro" id="IPR001024">
    <property type="entry name" value="PLAT/LH2_dom"/>
</dbReference>
<dbReference type="InterPro" id="IPR036392">
    <property type="entry name" value="PLAT/LH2_dom_sf"/>
</dbReference>
<dbReference type="InterPro" id="IPR000734">
    <property type="entry name" value="TAG_lipase"/>
</dbReference>
<dbReference type="PANTHER" id="PTHR11610">
    <property type="entry name" value="LIPASE"/>
    <property type="match status" value="1"/>
</dbReference>
<dbReference type="PANTHER" id="PTHR11610:SF165">
    <property type="entry name" value="PANCREATIC LIPASE-RELATED PROTEIN 2"/>
    <property type="match status" value="1"/>
</dbReference>
<dbReference type="Pfam" id="PF00151">
    <property type="entry name" value="Lipase"/>
    <property type="match status" value="1"/>
</dbReference>
<dbReference type="Pfam" id="PF01477">
    <property type="entry name" value="PLAT"/>
    <property type="match status" value="1"/>
</dbReference>
<dbReference type="PIRSF" id="PIRSF000865">
    <property type="entry name" value="Lipoprotein_lipase_LIPH"/>
    <property type="match status" value="1"/>
</dbReference>
<dbReference type="PRINTS" id="PR00823">
    <property type="entry name" value="PANCLIPASE"/>
</dbReference>
<dbReference type="PRINTS" id="PR00821">
    <property type="entry name" value="TAGLIPASE"/>
</dbReference>
<dbReference type="SMART" id="SM00308">
    <property type="entry name" value="LH2"/>
    <property type="match status" value="1"/>
</dbReference>
<dbReference type="SUPFAM" id="SSF53474">
    <property type="entry name" value="alpha/beta-Hydrolases"/>
    <property type="match status" value="1"/>
</dbReference>
<dbReference type="SUPFAM" id="SSF49723">
    <property type="entry name" value="Lipase/lipooxygenase domain (PLAT/LH2 domain)"/>
    <property type="match status" value="1"/>
</dbReference>
<dbReference type="PROSITE" id="PS00120">
    <property type="entry name" value="LIPASE_SER"/>
    <property type="match status" value="1"/>
</dbReference>
<dbReference type="PROSITE" id="PS50095">
    <property type="entry name" value="PLAT"/>
    <property type="match status" value="1"/>
</dbReference>
<evidence type="ECO:0000250" key="1">
    <source>
        <dbReference type="UniProtKB" id="P17892"/>
    </source>
</evidence>
<evidence type="ECO:0000250" key="2">
    <source>
        <dbReference type="UniProtKB" id="P54317"/>
    </source>
</evidence>
<evidence type="ECO:0000250" key="3">
    <source>
        <dbReference type="UniProtKB" id="P54318"/>
    </source>
</evidence>
<evidence type="ECO:0000255" key="4"/>
<evidence type="ECO:0000255" key="5">
    <source>
        <dbReference type="PROSITE-ProRule" id="PRU00152"/>
    </source>
</evidence>
<evidence type="ECO:0000255" key="6">
    <source>
        <dbReference type="PROSITE-ProRule" id="PRU00498"/>
    </source>
</evidence>
<evidence type="ECO:0000255" key="7">
    <source>
        <dbReference type="PROSITE-ProRule" id="PRU10037"/>
    </source>
</evidence>
<evidence type="ECO:0000269" key="8">
    <source>
    </source>
</evidence>
<evidence type="ECO:0000305" key="9"/>
<evidence type="ECO:0000305" key="10">
    <source>
    </source>
</evidence>
<sequence length="471" mass="53199">MLPSWTIGLLLLATVRGKEICYQPFGCFSDETPWARTCHWPFKLFPWAPKDIDTHFLLYTNENPNNFQLINITNLDTIEASNFQLDRKTRFIIHGFIDKGEDSWPSEMCKKMFKVEKVNCICVDWRRGALTRYTQAVHNTRVVGAEIAFLIQGLSTKFDYNPENVHLIGHSLGAHTAAEAGRRLGGHVGRLTGLDPAQPCFQNTPEEVRLDPSDAMFVDVIHTDSAPFIPFLGFGMSQKVGHLDFYPNGGKEMPGCQKNTLSTIVDVDGIWEGIEDFAACNHLRSYKYYSSSIFSPDGFLGYPCASYDEFQEEENKCFPCPAEGCPKMGHYADQFQGKTSAVGQTFFLNTGDSGNFTRWRYRVSVTLAGKRNVHGYIRIALYGSNANSKQYNIFKGSLQPNARYTHDIDVDLNVGKVQKVKFLWYNHIIDLFHPELGASQVMVQSGEDKTEHKFCGSDTVRENILQTLNPC</sequence>
<name>LIPR2_PIG</name>